<name>HMGN4_BOVIN</name>
<sequence length="90" mass="9583">MPKRKAKGDAKGDKGKVKDEPQRRSARLSAKPALPKPEPRPKKAPAKKGEKLAKGRKGKAEVSKDGNNPAKNRDASTVQSQKAEGTGDAK</sequence>
<organism>
    <name type="scientific">Bos taurus</name>
    <name type="common">Bovine</name>
    <dbReference type="NCBI Taxonomy" id="9913"/>
    <lineage>
        <taxon>Eukaryota</taxon>
        <taxon>Metazoa</taxon>
        <taxon>Chordata</taxon>
        <taxon>Craniata</taxon>
        <taxon>Vertebrata</taxon>
        <taxon>Euteleostomi</taxon>
        <taxon>Mammalia</taxon>
        <taxon>Eutheria</taxon>
        <taxon>Laurasiatheria</taxon>
        <taxon>Artiodactyla</taxon>
        <taxon>Ruminantia</taxon>
        <taxon>Pecora</taxon>
        <taxon>Bovidae</taxon>
        <taxon>Bovinae</taxon>
        <taxon>Bos</taxon>
    </lineage>
</organism>
<reference key="1">
    <citation type="submission" date="2005-11" db="EMBL/GenBank/DDBJ databases">
        <authorList>
            <consortium name="NIH - Mammalian Gene Collection (MGC) project"/>
        </authorList>
    </citation>
    <scope>NUCLEOTIDE SEQUENCE [LARGE SCALE MRNA]</scope>
    <source>
        <strain>Crossbred X Angus</strain>
        <tissue>Liver</tissue>
    </source>
</reference>
<comment type="subcellular location">
    <subcellularLocation>
        <location evidence="1">Nucleus</location>
    </subcellularLocation>
</comment>
<comment type="similarity">
    <text evidence="4">Belongs to the HMGN family.</text>
</comment>
<proteinExistence type="inferred from homology"/>
<feature type="chain" id="PRO_0000232594" description="High mobility group nucleosome-binding domain-containing protein 4">
    <location>
        <begin position="1"/>
        <end position="90"/>
    </location>
</feature>
<feature type="region of interest" description="Disordered" evidence="3">
    <location>
        <begin position="1"/>
        <end position="90"/>
    </location>
</feature>
<feature type="compositionally biased region" description="Basic and acidic residues" evidence="3">
    <location>
        <begin position="7"/>
        <end position="23"/>
    </location>
</feature>
<feature type="compositionally biased region" description="Basic and acidic residues" evidence="3">
    <location>
        <begin position="37"/>
        <end position="64"/>
    </location>
</feature>
<feature type="compositionally biased region" description="Polar residues" evidence="3">
    <location>
        <begin position="65"/>
        <end position="83"/>
    </location>
</feature>
<feature type="modified residue" description="ADP-ribosylserine" evidence="2">
    <location>
        <position position="29"/>
    </location>
</feature>
<feature type="modified residue" description="Phosphoserine" evidence="2">
    <location>
        <position position="80"/>
    </location>
</feature>
<feature type="modified residue" description="N6-acetyllysine" evidence="2">
    <location>
        <position position="82"/>
    </location>
</feature>
<accession>Q2YDK4</accession>
<gene>
    <name type="primary">HMGN4</name>
</gene>
<dbReference type="EMBL" id="BC110182">
    <property type="protein sequence ID" value="AAI10183.1"/>
    <property type="molecule type" value="mRNA"/>
</dbReference>
<dbReference type="RefSeq" id="NP_001040012.1">
    <property type="nucleotide sequence ID" value="NM_001046547.1"/>
</dbReference>
<dbReference type="FunCoup" id="Q2YDK4">
    <property type="interactions" value="2"/>
</dbReference>
<dbReference type="STRING" id="9913.ENSBTAP00000042444"/>
<dbReference type="PaxDb" id="9913-ENSBTAP00000042444"/>
<dbReference type="GeneID" id="614918"/>
<dbReference type="KEGG" id="bta:614918"/>
<dbReference type="CTD" id="10473"/>
<dbReference type="VEuPathDB" id="HostDB:ENSBTAG00000031747"/>
<dbReference type="eggNOG" id="ENOG502S5FK">
    <property type="taxonomic scope" value="Eukaryota"/>
</dbReference>
<dbReference type="HOGENOM" id="CLU_141985_0_2_1"/>
<dbReference type="InParanoid" id="Q2YDK4"/>
<dbReference type="OrthoDB" id="9908225at2759"/>
<dbReference type="CD-CODE" id="D7FE2080">
    <property type="entry name" value="Nucleolus"/>
</dbReference>
<dbReference type="Proteomes" id="UP000009136">
    <property type="component" value="Chromosome 23"/>
</dbReference>
<dbReference type="Bgee" id="ENSBTAG00000031747">
    <property type="expression patterns" value="Expressed in corpus epididymis and 105 other cell types or tissues"/>
</dbReference>
<dbReference type="GO" id="GO:0000785">
    <property type="term" value="C:chromatin"/>
    <property type="evidence" value="ECO:0007669"/>
    <property type="project" value="InterPro"/>
</dbReference>
<dbReference type="GO" id="GO:0005634">
    <property type="term" value="C:nucleus"/>
    <property type="evidence" value="ECO:0000318"/>
    <property type="project" value="GO_Central"/>
</dbReference>
<dbReference type="GO" id="GO:0003682">
    <property type="term" value="F:chromatin binding"/>
    <property type="evidence" value="ECO:0000318"/>
    <property type="project" value="GO_Central"/>
</dbReference>
<dbReference type="GO" id="GO:0031492">
    <property type="term" value="F:nucleosomal DNA binding"/>
    <property type="evidence" value="ECO:0007669"/>
    <property type="project" value="InterPro"/>
</dbReference>
<dbReference type="GO" id="GO:0006325">
    <property type="term" value="P:chromatin organization"/>
    <property type="evidence" value="ECO:0000318"/>
    <property type="project" value="GO_Central"/>
</dbReference>
<dbReference type="InterPro" id="IPR000079">
    <property type="entry name" value="HMGN_fam"/>
</dbReference>
<dbReference type="PANTHER" id="PTHR23087:SF31">
    <property type="entry name" value="HIGH MOBILITY GROUP NUCLEOSOME-BINDING DOMAIN-CONTAINING PROTEIN 4"/>
    <property type="match status" value="1"/>
</dbReference>
<dbReference type="PANTHER" id="PTHR23087">
    <property type="entry name" value="NONHISTONE CHROMOSOMAL PROTEIN HMG"/>
    <property type="match status" value="1"/>
</dbReference>
<dbReference type="Pfam" id="PF01101">
    <property type="entry name" value="HMG14_17"/>
    <property type="match status" value="1"/>
</dbReference>
<dbReference type="PRINTS" id="PR00925">
    <property type="entry name" value="NONHISHMG17"/>
</dbReference>
<dbReference type="SMART" id="SM00527">
    <property type="entry name" value="HMG17"/>
    <property type="match status" value="1"/>
</dbReference>
<dbReference type="PROSITE" id="PS00355">
    <property type="entry name" value="HMG14_17"/>
    <property type="match status" value="1"/>
</dbReference>
<protein>
    <recommendedName>
        <fullName>High mobility group nucleosome-binding domain-containing protein 4</fullName>
    </recommendedName>
</protein>
<keyword id="KW-0007">Acetylation</keyword>
<keyword id="KW-0013">ADP-ribosylation</keyword>
<keyword id="KW-0238">DNA-binding</keyword>
<keyword id="KW-0539">Nucleus</keyword>
<keyword id="KW-0597">Phosphoprotein</keyword>
<keyword id="KW-1185">Reference proteome</keyword>
<evidence type="ECO:0000250" key="1"/>
<evidence type="ECO:0000250" key="2">
    <source>
        <dbReference type="UniProtKB" id="O00479"/>
    </source>
</evidence>
<evidence type="ECO:0000256" key="3">
    <source>
        <dbReference type="SAM" id="MobiDB-lite"/>
    </source>
</evidence>
<evidence type="ECO:0000305" key="4"/>